<sequence length="399" mass="45282">MDSKGRNVIVCDNGTGFVKCGYAGSNFPTHIFPSMVGRPMIRAVNKIGDIEVKDLHVDDLMVGDEASQLRSLLEVSYPMENGVVRNWDDMCHVWDYTFGPKKMDIDPTNTKILLTEPPMNPTKNREKMIEVMFEKYGFDSAYIAIQAVLTLYAQGLISGVVIDSGDGVTHICPVYEEFALPHLTRRLDIAGRDITRYLIKLLLLRGYAFNHSADFETVRIMKEKLCYIGYDIEMEQRLALETTVLVESYTLPDGRVIKVGGERFEAPEALFQPHLINVEGPGIAELAFNTIQAADIDIRPELYKHIVLSGGSTMYPGLPSRLEREIKQLYLERVLKNDTEKLAKFKIRIEDPPRRKDMVFIGGAVLAEVTKDRDGFWMSKQEYQEQGLKVLQKLQKISH</sequence>
<evidence type="ECO:0000250" key="1"/>
<evidence type="ECO:0000303" key="2">
    <source>
    </source>
</evidence>
<evidence type="ECO:0000303" key="3">
    <source>
    </source>
</evidence>
<evidence type="ECO:0000305" key="4"/>
<keyword id="KW-0009">Actin-binding</keyword>
<keyword id="KW-0025">Alternative splicing</keyword>
<keyword id="KW-0067">ATP-binding</keyword>
<keyword id="KW-0963">Cytoplasm</keyword>
<keyword id="KW-0206">Cytoskeleton</keyword>
<keyword id="KW-0547">Nucleotide-binding</keyword>
<keyword id="KW-1185">Reference proteome</keyword>
<protein>
    <recommendedName>
        <fullName>Actin-related protein 2</fullName>
    </recommendedName>
    <alternativeName>
        <fullName>Actin-like protein 14D</fullName>
    </alternativeName>
    <alternativeName>
        <fullName>Actin-like protein 2</fullName>
    </alternativeName>
</protein>
<feature type="chain" id="PRO_0000089075" description="Actin-related protein 2">
    <location>
        <begin position="1"/>
        <end position="399"/>
    </location>
</feature>
<feature type="binding site" evidence="1">
    <location>
        <begin position="165"/>
        <end position="167"/>
    </location>
    <ligand>
        <name>ATP</name>
        <dbReference type="ChEBI" id="CHEBI:30616"/>
    </ligand>
</feature>
<feature type="binding site" evidence="1">
    <location>
        <begin position="219"/>
        <end position="223"/>
    </location>
    <ligand>
        <name>ATP</name>
        <dbReference type="ChEBI" id="CHEBI:30616"/>
    </ligand>
</feature>
<feature type="binding site" evidence="1">
    <location>
        <begin position="310"/>
        <end position="315"/>
    </location>
    <ligand>
        <name>ATP</name>
        <dbReference type="ChEBI" id="CHEBI:30616"/>
    </ligand>
</feature>
<feature type="splice variant" id="VSP_053563" description="In isoform A." evidence="2 3">
    <location>
        <begin position="56"/>
        <end position="60"/>
    </location>
</feature>
<feature type="sequence conflict" description="In Ref. 1; CAA55238." evidence="4" ref="1">
    <original>D</original>
    <variation>DR</variation>
    <location>
        <position position="2"/>
    </location>
</feature>
<feature type="sequence conflict" description="In Ref. 1; CAA55238." evidence="4" ref="1">
    <original>D</original>
    <variation>E</variation>
    <location>
        <position position="95"/>
    </location>
</feature>
<feature type="sequence conflict" description="In Ref. 1; CAA55238." evidence="4" ref="1">
    <original>VL</original>
    <variation>AW</variation>
    <location>
        <begin position="148"/>
        <end position="149"/>
    </location>
</feature>
<organism>
    <name type="scientific">Drosophila melanogaster</name>
    <name type="common">Fruit fly</name>
    <dbReference type="NCBI Taxonomy" id="7227"/>
    <lineage>
        <taxon>Eukaryota</taxon>
        <taxon>Metazoa</taxon>
        <taxon>Ecdysozoa</taxon>
        <taxon>Arthropoda</taxon>
        <taxon>Hexapoda</taxon>
        <taxon>Insecta</taxon>
        <taxon>Pterygota</taxon>
        <taxon>Neoptera</taxon>
        <taxon>Endopterygota</taxon>
        <taxon>Diptera</taxon>
        <taxon>Brachycera</taxon>
        <taxon>Muscomorpha</taxon>
        <taxon>Ephydroidea</taxon>
        <taxon>Drosophilidae</taxon>
        <taxon>Drosophila</taxon>
        <taxon>Sophophora</taxon>
    </lineage>
</organism>
<gene>
    <name type="primary">Arp2</name>
    <name type="synonym">Actr14D</name>
    <name type="synonym">Arp14D</name>
    <name type="ORF">CG9901</name>
</gene>
<dbReference type="EMBL" id="X78486">
    <property type="protein sequence ID" value="CAA55238.1"/>
    <property type="molecule type" value="mRNA"/>
</dbReference>
<dbReference type="EMBL" id="AE014298">
    <property type="protein sequence ID" value="AAF48621.1"/>
    <property type="molecule type" value="Genomic_DNA"/>
</dbReference>
<dbReference type="EMBL" id="AE014298">
    <property type="protein sequence ID" value="ABW09432.1"/>
    <property type="molecule type" value="Genomic_DNA"/>
</dbReference>
<dbReference type="EMBL" id="AE014298">
    <property type="protein sequence ID" value="AGB95463.1"/>
    <property type="molecule type" value="Genomic_DNA"/>
</dbReference>
<dbReference type="EMBL" id="AY061256">
    <property type="protein sequence ID" value="AAL28804.1"/>
    <property type="molecule type" value="mRNA"/>
</dbReference>
<dbReference type="EMBL" id="BT126051">
    <property type="protein sequence ID" value="ADY17750.1"/>
    <property type="molecule type" value="mRNA"/>
</dbReference>
<dbReference type="PIR" id="S47987">
    <property type="entry name" value="S47987"/>
</dbReference>
<dbReference type="RefSeq" id="NP_001097001.1">
    <molecule id="P45888-2"/>
    <property type="nucleotide sequence ID" value="NM_001103531.2"/>
</dbReference>
<dbReference type="RefSeq" id="NP_001259621.1">
    <molecule id="P45888-1"/>
    <property type="nucleotide sequence ID" value="NM_001272692.1"/>
</dbReference>
<dbReference type="RefSeq" id="NP_523372.2">
    <molecule id="P45888-2"/>
    <property type="nucleotide sequence ID" value="NM_078648.4"/>
</dbReference>
<dbReference type="SMR" id="P45888"/>
<dbReference type="BioGRID" id="58961">
    <property type="interactions" value="14"/>
</dbReference>
<dbReference type="ComplexPortal" id="CPX-2589">
    <property type="entry name" value="Actin-related protein 2/3 complex, Arpc3B variant"/>
</dbReference>
<dbReference type="ComplexPortal" id="CPX-2739">
    <property type="entry name" value="Actin-related protein 2/3 complex, Arpc3A variant"/>
</dbReference>
<dbReference type="FunCoup" id="P45888">
    <property type="interactions" value="1650"/>
</dbReference>
<dbReference type="IntAct" id="P45888">
    <property type="interactions" value="20"/>
</dbReference>
<dbReference type="STRING" id="7227.FBpp0302793"/>
<dbReference type="PaxDb" id="7227-FBpp0302793"/>
<dbReference type="DNASU" id="32623"/>
<dbReference type="EnsemblMetazoa" id="FBtr0074295">
    <molecule id="P45888-2"/>
    <property type="protein sequence ID" value="FBpp0074070"/>
    <property type="gene ID" value="FBgn0011742"/>
</dbReference>
<dbReference type="EnsemblMetazoa" id="FBtr0112868">
    <molecule id="P45888-2"/>
    <property type="protein sequence ID" value="FBpp0111781"/>
    <property type="gene ID" value="FBgn0011742"/>
</dbReference>
<dbReference type="EnsemblMetazoa" id="FBtr0310673">
    <molecule id="P45888-1"/>
    <property type="protein sequence ID" value="FBpp0302793"/>
    <property type="gene ID" value="FBgn0011742"/>
</dbReference>
<dbReference type="GeneID" id="32623"/>
<dbReference type="KEGG" id="dme:Dmel_CG9901"/>
<dbReference type="UCSC" id="CG9901-RB">
    <property type="organism name" value="d. melanogaster"/>
</dbReference>
<dbReference type="AGR" id="FB:FBgn0011742"/>
<dbReference type="CTD" id="32623"/>
<dbReference type="FlyBase" id="FBgn0011742">
    <property type="gene designation" value="Arp2"/>
</dbReference>
<dbReference type="VEuPathDB" id="VectorBase:FBgn0011742"/>
<dbReference type="eggNOG" id="KOG0677">
    <property type="taxonomic scope" value="Eukaryota"/>
</dbReference>
<dbReference type="GeneTree" id="ENSGT00940000154556"/>
<dbReference type="InParanoid" id="P45888"/>
<dbReference type="OMA" id="WEDMQHL"/>
<dbReference type="OrthoDB" id="10251209at2759"/>
<dbReference type="PhylomeDB" id="P45888"/>
<dbReference type="Reactome" id="R-DME-2029482">
    <property type="pathway name" value="Regulation of actin dynamics for phagocytic cup formation"/>
</dbReference>
<dbReference type="Reactome" id="R-DME-3928662">
    <property type="pathway name" value="EPHB-mediated forward signaling"/>
</dbReference>
<dbReference type="Reactome" id="R-DME-5663213">
    <property type="pathway name" value="RHO GTPases Activate WASPs and WAVEs"/>
</dbReference>
<dbReference type="Reactome" id="R-DME-6798695">
    <property type="pathway name" value="Neutrophil degranulation"/>
</dbReference>
<dbReference type="Reactome" id="R-DME-8856828">
    <property type="pathway name" value="Clathrin-mediated endocytosis"/>
</dbReference>
<dbReference type="BioGRID-ORCS" id="32623">
    <property type="hits" value="1 hit in 1 CRISPR screen"/>
</dbReference>
<dbReference type="ChiTaRS" id="Arp2">
    <property type="organism name" value="fly"/>
</dbReference>
<dbReference type="GenomeRNAi" id="32623"/>
<dbReference type="PRO" id="PR:P45888"/>
<dbReference type="Proteomes" id="UP000000803">
    <property type="component" value="Chromosome X"/>
</dbReference>
<dbReference type="Bgee" id="FBgn0011742">
    <property type="expression patterns" value="Expressed in adult differentiating enterocyte in digestive tract and 206 other cell types or tissues"/>
</dbReference>
<dbReference type="ExpressionAtlas" id="P45888">
    <property type="expression patterns" value="baseline and differential"/>
</dbReference>
<dbReference type="GO" id="GO:0005884">
    <property type="term" value="C:actin filament"/>
    <property type="evidence" value="ECO:0000250"/>
    <property type="project" value="FlyBase"/>
</dbReference>
<dbReference type="GO" id="GO:0005885">
    <property type="term" value="C:Arp2/3 protein complex"/>
    <property type="evidence" value="ECO:0000250"/>
    <property type="project" value="FlyBase"/>
</dbReference>
<dbReference type="GO" id="GO:0005938">
    <property type="term" value="C:cell cortex"/>
    <property type="evidence" value="ECO:0000318"/>
    <property type="project" value="GO_Central"/>
</dbReference>
<dbReference type="GO" id="GO:0003779">
    <property type="term" value="F:actin binding"/>
    <property type="evidence" value="ECO:0007669"/>
    <property type="project" value="UniProtKB-KW"/>
</dbReference>
<dbReference type="GO" id="GO:0005524">
    <property type="term" value="F:ATP binding"/>
    <property type="evidence" value="ECO:0007669"/>
    <property type="project" value="UniProtKB-KW"/>
</dbReference>
<dbReference type="GO" id="GO:0005200">
    <property type="term" value="F:structural constituent of cytoskeleton"/>
    <property type="evidence" value="ECO:0000250"/>
    <property type="project" value="FlyBase"/>
</dbReference>
<dbReference type="GO" id="GO:0007015">
    <property type="term" value="P:actin filament organization"/>
    <property type="evidence" value="ECO:0000315"/>
    <property type="project" value="FlyBase"/>
</dbReference>
<dbReference type="GO" id="GO:0034314">
    <property type="term" value="P:Arp2/3 complex-mediated actin nucleation"/>
    <property type="evidence" value="ECO:0000250"/>
    <property type="project" value="FlyBase"/>
</dbReference>
<dbReference type="GO" id="GO:0030032">
    <property type="term" value="P:lamellipodium assembly"/>
    <property type="evidence" value="ECO:0000315"/>
    <property type="project" value="FlyBase"/>
</dbReference>
<dbReference type="GO" id="GO:0045887">
    <property type="term" value="P:positive regulation of synaptic assembly at neuromuscular junction"/>
    <property type="evidence" value="ECO:0000315"/>
    <property type="project" value="FlyBase"/>
</dbReference>
<dbReference type="GO" id="GO:0051489">
    <property type="term" value="P:regulation of filopodium assembly"/>
    <property type="evidence" value="ECO:0000315"/>
    <property type="project" value="FlyBase"/>
</dbReference>
<dbReference type="GO" id="GO:0072553">
    <property type="term" value="P:terminal button organization"/>
    <property type="evidence" value="ECO:0000315"/>
    <property type="project" value="FlyBase"/>
</dbReference>
<dbReference type="GO" id="GO:0035313">
    <property type="term" value="P:wound healing, spreading of epidermal cells"/>
    <property type="evidence" value="ECO:0000315"/>
    <property type="project" value="FlyBase"/>
</dbReference>
<dbReference type="CDD" id="cd10220">
    <property type="entry name" value="ASKHA_NBD_Arp2"/>
    <property type="match status" value="1"/>
</dbReference>
<dbReference type="FunFam" id="3.30.420.40:FF:000538">
    <property type="entry name" value="Actin-related protein 2"/>
    <property type="match status" value="1"/>
</dbReference>
<dbReference type="FunFam" id="3.90.640.10:FF:000005">
    <property type="entry name" value="Actin-related protein 2"/>
    <property type="match status" value="1"/>
</dbReference>
<dbReference type="Gene3D" id="3.30.420.40">
    <property type="match status" value="2"/>
</dbReference>
<dbReference type="Gene3D" id="3.90.640.10">
    <property type="entry name" value="Actin, Chain A, domain 4"/>
    <property type="match status" value="1"/>
</dbReference>
<dbReference type="InterPro" id="IPR004000">
    <property type="entry name" value="Actin"/>
</dbReference>
<dbReference type="InterPro" id="IPR020902">
    <property type="entry name" value="Actin/actin-like_CS"/>
</dbReference>
<dbReference type="InterPro" id="IPR043129">
    <property type="entry name" value="ATPase_NBD"/>
</dbReference>
<dbReference type="PANTHER" id="PTHR11937">
    <property type="entry name" value="ACTIN"/>
    <property type="match status" value="1"/>
</dbReference>
<dbReference type="Pfam" id="PF00022">
    <property type="entry name" value="Actin"/>
    <property type="match status" value="1"/>
</dbReference>
<dbReference type="PRINTS" id="PR00190">
    <property type="entry name" value="ACTIN"/>
</dbReference>
<dbReference type="SMART" id="SM00268">
    <property type="entry name" value="ACTIN"/>
    <property type="match status" value="1"/>
</dbReference>
<dbReference type="SUPFAM" id="SSF53067">
    <property type="entry name" value="Actin-like ATPase domain"/>
    <property type="match status" value="2"/>
</dbReference>
<dbReference type="PROSITE" id="PS01132">
    <property type="entry name" value="ACTINS_ACT_LIKE"/>
    <property type="match status" value="1"/>
</dbReference>
<proteinExistence type="evidence at transcript level"/>
<reference key="1">
    <citation type="journal article" date="1994" name="J. Mol. Biol.">
        <title>Genes encoding actin-related proteins of Drosophila melanogaster.</title>
        <authorList>
            <person name="Fyrberg C."/>
            <person name="Ryan L."/>
            <person name="Kenton M."/>
            <person name="Fyrberg E.A."/>
        </authorList>
    </citation>
    <scope>NUCLEOTIDE SEQUENCE [MRNA] (ISOFORM A)</scope>
    <source>
        <strain>Oregon-R</strain>
    </source>
</reference>
<reference key="2">
    <citation type="journal article" date="2000" name="Science">
        <title>The genome sequence of Drosophila melanogaster.</title>
        <authorList>
            <person name="Adams M.D."/>
            <person name="Celniker S.E."/>
            <person name="Holt R.A."/>
            <person name="Evans C.A."/>
            <person name="Gocayne J.D."/>
            <person name="Amanatides P.G."/>
            <person name="Scherer S.E."/>
            <person name="Li P.W."/>
            <person name="Hoskins R.A."/>
            <person name="Galle R.F."/>
            <person name="George R.A."/>
            <person name="Lewis S.E."/>
            <person name="Richards S."/>
            <person name="Ashburner M."/>
            <person name="Henderson S.N."/>
            <person name="Sutton G.G."/>
            <person name="Wortman J.R."/>
            <person name="Yandell M.D."/>
            <person name="Zhang Q."/>
            <person name="Chen L.X."/>
            <person name="Brandon R.C."/>
            <person name="Rogers Y.-H.C."/>
            <person name="Blazej R.G."/>
            <person name="Champe M."/>
            <person name="Pfeiffer B.D."/>
            <person name="Wan K.H."/>
            <person name="Doyle C."/>
            <person name="Baxter E.G."/>
            <person name="Helt G."/>
            <person name="Nelson C.R."/>
            <person name="Miklos G.L.G."/>
            <person name="Abril J.F."/>
            <person name="Agbayani A."/>
            <person name="An H.-J."/>
            <person name="Andrews-Pfannkoch C."/>
            <person name="Baldwin D."/>
            <person name="Ballew R.M."/>
            <person name="Basu A."/>
            <person name="Baxendale J."/>
            <person name="Bayraktaroglu L."/>
            <person name="Beasley E.M."/>
            <person name="Beeson K.Y."/>
            <person name="Benos P.V."/>
            <person name="Berman B.P."/>
            <person name="Bhandari D."/>
            <person name="Bolshakov S."/>
            <person name="Borkova D."/>
            <person name="Botchan M.R."/>
            <person name="Bouck J."/>
            <person name="Brokstein P."/>
            <person name="Brottier P."/>
            <person name="Burtis K.C."/>
            <person name="Busam D.A."/>
            <person name="Butler H."/>
            <person name="Cadieu E."/>
            <person name="Center A."/>
            <person name="Chandra I."/>
            <person name="Cherry J.M."/>
            <person name="Cawley S."/>
            <person name="Dahlke C."/>
            <person name="Davenport L.B."/>
            <person name="Davies P."/>
            <person name="de Pablos B."/>
            <person name="Delcher A."/>
            <person name="Deng Z."/>
            <person name="Mays A.D."/>
            <person name="Dew I."/>
            <person name="Dietz S.M."/>
            <person name="Dodson K."/>
            <person name="Doup L.E."/>
            <person name="Downes M."/>
            <person name="Dugan-Rocha S."/>
            <person name="Dunkov B.C."/>
            <person name="Dunn P."/>
            <person name="Durbin K.J."/>
            <person name="Evangelista C.C."/>
            <person name="Ferraz C."/>
            <person name="Ferriera S."/>
            <person name="Fleischmann W."/>
            <person name="Fosler C."/>
            <person name="Gabrielian A.E."/>
            <person name="Garg N.S."/>
            <person name="Gelbart W.M."/>
            <person name="Glasser K."/>
            <person name="Glodek A."/>
            <person name="Gong F."/>
            <person name="Gorrell J.H."/>
            <person name="Gu Z."/>
            <person name="Guan P."/>
            <person name="Harris M."/>
            <person name="Harris N.L."/>
            <person name="Harvey D.A."/>
            <person name="Heiman T.J."/>
            <person name="Hernandez J.R."/>
            <person name="Houck J."/>
            <person name="Hostin D."/>
            <person name="Houston K.A."/>
            <person name="Howland T.J."/>
            <person name="Wei M.-H."/>
            <person name="Ibegwam C."/>
            <person name="Jalali M."/>
            <person name="Kalush F."/>
            <person name="Karpen G.H."/>
            <person name="Ke Z."/>
            <person name="Kennison J.A."/>
            <person name="Ketchum K.A."/>
            <person name="Kimmel B.E."/>
            <person name="Kodira C.D."/>
            <person name="Kraft C.L."/>
            <person name="Kravitz S."/>
            <person name="Kulp D."/>
            <person name="Lai Z."/>
            <person name="Lasko P."/>
            <person name="Lei Y."/>
            <person name="Levitsky A.A."/>
            <person name="Li J.H."/>
            <person name="Li Z."/>
            <person name="Liang Y."/>
            <person name="Lin X."/>
            <person name="Liu X."/>
            <person name="Mattei B."/>
            <person name="McIntosh T.C."/>
            <person name="McLeod M.P."/>
            <person name="McPherson D."/>
            <person name="Merkulov G."/>
            <person name="Milshina N.V."/>
            <person name="Mobarry C."/>
            <person name="Morris J."/>
            <person name="Moshrefi A."/>
            <person name="Mount S.M."/>
            <person name="Moy M."/>
            <person name="Murphy B."/>
            <person name="Murphy L."/>
            <person name="Muzny D.M."/>
            <person name="Nelson D.L."/>
            <person name="Nelson D.R."/>
            <person name="Nelson K.A."/>
            <person name="Nixon K."/>
            <person name="Nusskern D.R."/>
            <person name="Pacleb J.M."/>
            <person name="Palazzolo M."/>
            <person name="Pittman G.S."/>
            <person name="Pan S."/>
            <person name="Pollard J."/>
            <person name="Puri V."/>
            <person name="Reese M.G."/>
            <person name="Reinert K."/>
            <person name="Remington K."/>
            <person name="Saunders R.D.C."/>
            <person name="Scheeler F."/>
            <person name="Shen H."/>
            <person name="Shue B.C."/>
            <person name="Siden-Kiamos I."/>
            <person name="Simpson M."/>
            <person name="Skupski M.P."/>
            <person name="Smith T.J."/>
            <person name="Spier E."/>
            <person name="Spradling A.C."/>
            <person name="Stapleton M."/>
            <person name="Strong R."/>
            <person name="Sun E."/>
            <person name="Svirskas R."/>
            <person name="Tector C."/>
            <person name="Turner R."/>
            <person name="Venter E."/>
            <person name="Wang A.H."/>
            <person name="Wang X."/>
            <person name="Wang Z.-Y."/>
            <person name="Wassarman D.A."/>
            <person name="Weinstock G.M."/>
            <person name="Weissenbach J."/>
            <person name="Williams S.M."/>
            <person name="Woodage T."/>
            <person name="Worley K.C."/>
            <person name="Wu D."/>
            <person name="Yang S."/>
            <person name="Yao Q.A."/>
            <person name="Ye J."/>
            <person name="Yeh R.-F."/>
            <person name="Zaveri J.S."/>
            <person name="Zhan M."/>
            <person name="Zhang G."/>
            <person name="Zhao Q."/>
            <person name="Zheng L."/>
            <person name="Zheng X.H."/>
            <person name="Zhong F.N."/>
            <person name="Zhong W."/>
            <person name="Zhou X."/>
            <person name="Zhu S.C."/>
            <person name="Zhu X."/>
            <person name="Smith H.O."/>
            <person name="Gibbs R.A."/>
            <person name="Myers E.W."/>
            <person name="Rubin G.M."/>
            <person name="Venter J.C."/>
        </authorList>
    </citation>
    <scope>NUCLEOTIDE SEQUENCE [LARGE SCALE GENOMIC DNA]</scope>
    <source>
        <strain>Berkeley</strain>
    </source>
</reference>
<reference key="3">
    <citation type="journal article" date="2002" name="Genome Biol.">
        <title>Annotation of the Drosophila melanogaster euchromatic genome: a systematic review.</title>
        <authorList>
            <person name="Misra S."/>
            <person name="Crosby M.A."/>
            <person name="Mungall C.J."/>
            <person name="Matthews B.B."/>
            <person name="Campbell K.S."/>
            <person name="Hradecky P."/>
            <person name="Huang Y."/>
            <person name="Kaminker J.S."/>
            <person name="Millburn G.H."/>
            <person name="Prochnik S.E."/>
            <person name="Smith C.D."/>
            <person name="Tupy J.L."/>
            <person name="Whitfield E.J."/>
            <person name="Bayraktaroglu L."/>
            <person name="Berman B.P."/>
            <person name="Bettencourt B.R."/>
            <person name="Celniker S.E."/>
            <person name="de Grey A.D.N.J."/>
            <person name="Drysdale R.A."/>
            <person name="Harris N.L."/>
            <person name="Richter J."/>
            <person name="Russo S."/>
            <person name="Schroeder A.J."/>
            <person name="Shu S.Q."/>
            <person name="Stapleton M."/>
            <person name="Yamada C."/>
            <person name="Ashburner M."/>
            <person name="Gelbart W.M."/>
            <person name="Rubin G.M."/>
            <person name="Lewis S.E."/>
        </authorList>
    </citation>
    <scope>GENOME REANNOTATION</scope>
    <source>
        <strain>Berkeley</strain>
    </source>
</reference>
<reference key="4">
    <citation type="journal article" date="2002" name="Genome Biol.">
        <title>A Drosophila full-length cDNA resource.</title>
        <authorList>
            <person name="Stapleton M."/>
            <person name="Carlson J.W."/>
            <person name="Brokstein P."/>
            <person name="Yu C."/>
            <person name="Champe M."/>
            <person name="George R.A."/>
            <person name="Guarin H."/>
            <person name="Kronmiller B."/>
            <person name="Pacleb J.M."/>
            <person name="Park S."/>
            <person name="Wan K.H."/>
            <person name="Rubin G.M."/>
            <person name="Celniker S.E."/>
        </authorList>
    </citation>
    <scope>NUCLEOTIDE SEQUENCE [LARGE SCALE MRNA] (ISOFORM A)</scope>
    <source>
        <strain>Berkeley</strain>
        <tissue>Embryo</tissue>
    </source>
</reference>
<reference key="5">
    <citation type="submission" date="2011-02" db="EMBL/GenBank/DDBJ databases">
        <authorList>
            <person name="Carlson J."/>
            <person name="Booth B."/>
            <person name="Frise E."/>
            <person name="Park S."/>
            <person name="Wan K."/>
            <person name="Yu C."/>
            <person name="Celniker S."/>
        </authorList>
    </citation>
    <scope>NUCLEOTIDE SEQUENCE [LARGE SCALE MRNA] (ISOFORM C)</scope>
    <source>
        <strain>Berkeley</strain>
        <tissue>Embryo</tissue>
    </source>
</reference>
<comment type="function">
    <text evidence="1">Functions as ATP-binding component of the Arp2/3 complex which is involved in regulation of actin polymerization and together with an activating nucleation-promoting factor (NPF) mediates the formation of branched actin networks. Seems to contact the pointed end of the daughter actin filament (By similarity).</text>
</comment>
<comment type="subunit">
    <text evidence="1">Component of the Arp2/3 complex.</text>
</comment>
<comment type="subcellular location">
    <subcellularLocation>
        <location evidence="1">Cytoplasm</location>
        <location evidence="1">Cytoskeleton</location>
    </subcellularLocation>
</comment>
<comment type="alternative products">
    <event type="alternative splicing"/>
    <isoform>
        <id>P45888-1</id>
        <name>C</name>
        <sequence type="displayed"/>
    </isoform>
    <isoform>
        <id>P45888-2</id>
        <name>A</name>
        <name>B</name>
        <sequence type="described" ref="VSP_053563"/>
    </isoform>
</comment>
<comment type="similarity">
    <text evidence="4">Belongs to the actin family. ARP2 subfamily.</text>
</comment>
<name>ARP2_DROME</name>
<accession>P45888</accession>
<accession>A8JV17</accession>
<accession>F0JAK9</accession>
<accession>Q9VXF3</accession>